<dbReference type="EMBL" id="J04542">
    <property type="protein sequence ID" value="AAA76842.1"/>
    <property type="molecule type" value="Genomic_DNA"/>
</dbReference>
<dbReference type="EMBL" id="X52223">
    <property type="protein sequence ID" value="CAA36466.1"/>
    <property type="molecule type" value="Genomic_DNA"/>
</dbReference>
<dbReference type="PIR" id="S12154">
    <property type="entry name" value="S12154"/>
</dbReference>
<dbReference type="SMR" id="P17758"/>
<dbReference type="Proteomes" id="UP000007422">
    <property type="component" value="Segment"/>
</dbReference>
<dbReference type="GO" id="GO:0030430">
    <property type="term" value="C:host cell cytoplasm"/>
    <property type="evidence" value="ECO:0007669"/>
    <property type="project" value="UniProtKB-SubCell"/>
</dbReference>
<dbReference type="GO" id="GO:0020002">
    <property type="term" value="C:host cell plasma membrane"/>
    <property type="evidence" value="ECO:0007669"/>
    <property type="project" value="UniProtKB-SubCell"/>
</dbReference>
<dbReference type="GO" id="GO:0016020">
    <property type="term" value="C:membrane"/>
    <property type="evidence" value="ECO:0007669"/>
    <property type="project" value="UniProtKB-KW"/>
</dbReference>
<dbReference type="GO" id="GO:0044423">
    <property type="term" value="C:virion component"/>
    <property type="evidence" value="ECO:0007669"/>
    <property type="project" value="UniProtKB-KW"/>
</dbReference>
<dbReference type="GO" id="GO:0019058">
    <property type="term" value="P:viral life cycle"/>
    <property type="evidence" value="ECO:0007669"/>
    <property type="project" value="InterPro"/>
</dbReference>
<dbReference type="InterPro" id="IPR000475">
    <property type="entry name" value="Vif"/>
</dbReference>
<dbReference type="Pfam" id="PF00559">
    <property type="entry name" value="Vif"/>
    <property type="match status" value="1"/>
</dbReference>
<dbReference type="PRINTS" id="PR00349">
    <property type="entry name" value="VIRIONINFFCT"/>
</dbReference>
<keyword id="KW-0014">AIDS</keyword>
<keyword id="KW-1032">Host cell membrane</keyword>
<keyword id="KW-1035">Host cytoplasm</keyword>
<keyword id="KW-1043">Host membrane</keyword>
<keyword id="KW-0945">Host-virus interaction</keyword>
<keyword id="KW-0472">Membrane</keyword>
<keyword id="KW-0597">Phosphoprotein</keyword>
<keyword id="KW-0832">Ubl conjugation</keyword>
<keyword id="KW-0833">Ubl conjugation pathway</keyword>
<keyword id="KW-0946">Virion</keyword>
<sequence>MEEGKNWIVVPTWRVPGRMERWHSLVKHLKYRTKDLEEVRYVPHHKVGWAWWTCSRVIFPLEGESHLEIQAYWNLTPEKGWLSSHSVRLTWYTEKFWTDVTPDCADSLIHSTYFSCFTAGEVRRAIRGEKLLSCCNYPQAHKAQVPSLQYLALVVVQQNGRPQRKGAARKQWRRDHWRGLRVARQDYRSLKQGGSEPSAPRAHFPGVAKVLGILA</sequence>
<reference key="1">
    <citation type="journal article" date="1989" name="Proc. Natl. Acad. Sci. U.S.A.">
        <title>Molecular cloning of two west African human immunodeficiency virus type 2 isolates that replicate well in macrophages: a Gambian isolate, from a patient with neurologic acquired immunodeficiency syndrome, and a highly divergent Ghanian isolate.</title>
        <authorList>
            <person name="Kuehnel H."/>
            <person name="von Briesen H."/>
            <person name="Dietrich U."/>
            <person name="Adamski M."/>
            <person name="Mix D."/>
            <person name="Biesert L."/>
            <person name="Kreutz R."/>
            <person name="Immelmann A."/>
            <person name="Henco K."/>
            <person name="Meichsner C."/>
            <person name="Andreesen R."/>
            <person name="Gelderblom H."/>
            <person name="Ruebsamen-Waigmann H."/>
        </authorList>
    </citation>
    <scope>NUCLEOTIDE SEQUENCE [GENOMIC DNA]</scope>
</reference>
<reference key="2">
    <citation type="journal article" date="1990" name="Nucleic Acids Res.">
        <title>Nucleotide sequence of HIV-2D194, an isolate from a Gambian case of 'neuro-AIDS', which showed excellent growth in macrophages.</title>
        <authorList>
            <person name="Kuehnel H."/>
            <person name="Kreutz R."/>
            <person name="Ruebsamen-Waigmann H."/>
        </authorList>
    </citation>
    <scope>NUCLEOTIDE SEQUENCE [GENOMIC DNA]</scope>
</reference>
<comment type="function">
    <text evidence="1">Counteracts the innate antiviral activity of APOBEC3G. Forms a complex with host APOBEC3G thus preventing the entry of this lethally hypermutating enzyme into progeny virions. Functions as an adapter molecule, recruiting APOBEC3G to the ubiquitin-proteasome machinery. Targets APOBEC3G for degradation through the assembly with elongin BC complex, CUL5 and RBX1. Binds viral RNA and affects the stability of viral nucleoprotein core. May play a role in viral morphology (By similarity).</text>
</comment>
<comment type="subunit">
    <text evidence="1">Homomultimer; in vitro and presumably in vivo. Interacts with viral Pr55Gag precursor and human APOBEC3G. The interaction between Vif and APOBEC3G is species-specific, which may play a role in restricting the replication of HIV to humans. Forms an E3 ligase complex by interacting with human CUL5 and elongin BC complex (ELOB and ELOC) (By similarity).</text>
</comment>
<comment type="subcellular location">
    <subcellularLocation>
        <location evidence="1">Host cytoplasm</location>
    </subcellularLocation>
    <subcellularLocation>
        <location evidence="1">Host cell membrane</location>
        <topology evidence="1">Peripheral membrane protein</topology>
        <orientation evidence="1">Cytoplasmic side</orientation>
    </subcellularLocation>
    <subcellularLocation>
        <location evidence="1">Virion</location>
    </subcellularLocation>
    <text evidence="1">In the cytoplasm, seems to colocalize with intermediate filament vimentin. A fraction is associated with the cytoplasmic side of cellular membranes, presumably via the interaction with Pr55Gag precursor (By similarity).</text>
</comment>
<comment type="induction">
    <text>Expressed late during infection in a Rev-dependent manner.</text>
</comment>
<comment type="domain">
    <text evidence="1">The BC-like-box motif mediates the interaction with elongin BC complex.</text>
</comment>
<comment type="domain">
    <text evidence="1">The HCCH motif (H-x(5)-C-x(18)-C-x(5)-H) mediates the interaction with CUL5.</text>
</comment>
<comment type="PTM">
    <text evidence="1">Processed in virion by the viral protease.</text>
</comment>
<comment type="PTM">
    <text evidence="1">Highly phosphorylated on serine and threonine residues.</text>
</comment>
<comment type="PTM">
    <text evidence="1">Polyubiquitinated and degraded by the proteasome in the presence of APOBEC3G.</text>
</comment>
<comment type="miscellaneous">
    <text>Required for replication in 'nonpermissive' cells, including primary T-cells, macrophages and certain T-cell lines, but is dispensable for replication in 'permissive' cell lines, such as 293T cells. In nonpermissive cells, Vif-defective viruses can produce virions, but they fail to complete reverse transcription and cannot successfully infect new cells.</text>
</comment>
<comment type="miscellaneous">
    <text>Vif-defective viruses show catastrophic failure in reverse transcription due to APOBEC-induced mutations that initiate a DNA base repair pathway and compromise the structural integrity of the ssDNA. In the absence of Vif, the virion is morphologically abnormal.</text>
</comment>
<comment type="similarity">
    <text evidence="2">Belongs to the primate lentivirus group Vif protein family.</text>
</comment>
<accession>P17758</accession>
<proteinExistence type="evidence at transcript level"/>
<organism>
    <name type="scientific">Human immunodeficiency virus type 2 subtype A (isolate D194)</name>
    <name type="common">HIV-2</name>
    <dbReference type="NCBI Taxonomy" id="11713"/>
    <lineage>
        <taxon>Viruses</taxon>
        <taxon>Riboviria</taxon>
        <taxon>Pararnavirae</taxon>
        <taxon>Artverviricota</taxon>
        <taxon>Revtraviricetes</taxon>
        <taxon>Ortervirales</taxon>
        <taxon>Retroviridae</taxon>
        <taxon>Orthoretrovirinae</taxon>
        <taxon>Lentivirus</taxon>
        <taxon>Human immunodeficiency virus 2</taxon>
    </lineage>
</organism>
<organismHost>
    <name type="scientific">Homo sapiens</name>
    <name type="common">Human</name>
    <dbReference type="NCBI Taxonomy" id="9606"/>
</organismHost>
<name>VIF_HV2D1</name>
<gene>
    <name type="primary">vif</name>
</gene>
<protein>
    <recommendedName>
        <fullName>Virion infectivity factor</fullName>
        <shortName>Vif</shortName>
    </recommendedName>
    <alternativeName>
        <fullName>Q protein</fullName>
    </alternativeName>
    <alternativeName>
        <fullName>SOR protein</fullName>
    </alternativeName>
</protein>
<evidence type="ECO:0000250" key="1"/>
<evidence type="ECO:0000305" key="2"/>
<feature type="chain" id="PRO_0000085316" description="Virion infectivity factor">
    <location>
        <begin position="1"/>
        <end position="215"/>
    </location>
</feature>
<feature type="region of interest" description="Multimerization" evidence="1">
    <location>
        <begin position="154"/>
        <end position="167"/>
    </location>
</feature>
<feature type="short sequence motif" description="HCCH motif" evidence="1">
    <location>
        <begin position="110"/>
        <end position="141"/>
    </location>
</feature>
<feature type="short sequence motif" description="BC-box-like motif" evidence="1">
    <location>
        <begin position="147"/>
        <end position="156"/>
    </location>
</feature>
<feature type="modified residue" description="Phosphothreonine; by host MAP4K1" evidence="1">
    <location>
        <position position="98"/>
    </location>
</feature>
<feature type="modified residue" description="Phosphoserine; by host" evidence="1">
    <location>
        <position position="147"/>
    </location>
</feature>